<organismHost>
    <name type="scientific">Homo sapiens</name>
    <name type="common">Human</name>
    <dbReference type="NCBI Taxonomy" id="9606"/>
</organismHost>
<sequence>METLSQRLNVCQDKILEHYENDSKRLCDHIDYWKHIRLECVLMYKAREMGIHSINHQVVPALSVSKAKALQAIELQMMLETLNNTEYKNEDWTMQQTSLELYLTAPTGCLKKHGYTVEVQFDGDVHNTMHYTNWKFIYLCIDGQCTVVEGQVNCKGIYYVHEGHITYFVNFTEEAKKYGTGKKWEVHAGGQVIVFPESVFSSDEISFAGIVTKLPTANNTTTSNSKTCALGTSEGVRRATTSTKRPRTEPEHRNTHHPNKLLRGDSVDSVNCGVISAAACTNQTRAVSCPATTPIIHLKGDANILKCLRYRLSKYKQLYEQVSSTWHWTCTDGKHKNAIVTLTYISTSQRDDFLNTVKIPNTVSVSTGYMTI</sequence>
<feature type="chain" id="PRO_0000133211" description="Regulatory protein E2">
    <location>
        <begin position="1"/>
        <end position="372"/>
    </location>
</feature>
<feature type="region of interest" description="Transactivation domain" evidence="1">
    <location>
        <begin position="1"/>
        <end position="200"/>
    </location>
</feature>
<feature type="region of interest" description="Disordered" evidence="2">
    <location>
        <begin position="235"/>
        <end position="262"/>
    </location>
</feature>
<feature type="region of interest" description="DNA-binding domain" evidence="1">
    <location>
        <begin position="292"/>
        <end position="372"/>
    </location>
</feature>
<feature type="cross-link" description="Glycyl lysine isopeptide (Lys-Gly) (interchain with G-Cter in SUMO)" evidence="1">
    <location>
        <position position="299"/>
    </location>
</feature>
<feature type="strand" evidence="3">
    <location>
        <begin position="292"/>
        <end position="300"/>
    </location>
</feature>
<feature type="helix" evidence="3">
    <location>
        <begin position="302"/>
        <end position="311"/>
    </location>
</feature>
<feature type="helix" evidence="3">
    <location>
        <begin position="312"/>
        <end position="314"/>
    </location>
</feature>
<feature type="helix" evidence="3">
    <location>
        <begin position="316"/>
        <end position="318"/>
    </location>
</feature>
<feature type="strand" evidence="4">
    <location>
        <begin position="331"/>
        <end position="333"/>
    </location>
</feature>
<feature type="turn" evidence="3">
    <location>
        <begin position="334"/>
        <end position="337"/>
    </location>
</feature>
<feature type="strand" evidence="3">
    <location>
        <begin position="338"/>
        <end position="343"/>
    </location>
</feature>
<feature type="helix" evidence="3">
    <location>
        <begin position="347"/>
        <end position="356"/>
    </location>
</feature>
<feature type="strand" evidence="3">
    <location>
        <begin position="363"/>
        <end position="371"/>
    </location>
</feature>
<accession>P17383</accession>
<organism>
    <name type="scientific">Human papillomavirus 31</name>
    <dbReference type="NCBI Taxonomy" id="10585"/>
    <lineage>
        <taxon>Viruses</taxon>
        <taxon>Monodnaviria</taxon>
        <taxon>Shotokuvirae</taxon>
        <taxon>Cossaviricota</taxon>
        <taxon>Papovaviricetes</taxon>
        <taxon>Zurhausenvirales</taxon>
        <taxon>Papillomaviridae</taxon>
        <taxon>Firstpapillomavirinae</taxon>
        <taxon>Alphapapillomavirus</taxon>
        <taxon>Alphapapillomavirus 9</taxon>
    </lineage>
</organism>
<evidence type="ECO:0000255" key="1">
    <source>
        <dbReference type="HAMAP-Rule" id="MF_04001"/>
    </source>
</evidence>
<evidence type="ECO:0000256" key="2">
    <source>
        <dbReference type="SAM" id="MobiDB-lite"/>
    </source>
</evidence>
<evidence type="ECO:0007829" key="3">
    <source>
        <dbReference type="PDB" id="1A7G"/>
    </source>
</evidence>
<evidence type="ECO:0007829" key="4">
    <source>
        <dbReference type="PDB" id="1DHM"/>
    </source>
</evidence>
<comment type="function">
    <text evidence="1">Plays a role in the initiation of viral DNA replication. A dimer of E2 interacts with a dimer of E1 in order to improve specificity of E1 DNA binding activity. Once the complex recognizes and binds DNA at specific sites, the E2 dimer is removed from DNA. E2 also regulates viral transcription through binding to the E2RE response element (5'-ACCNNNNNNGGT-3') present in multiple copies in the regulatory regions of the viral genome. Activates or represses transcription depending on E2RE's position with regards to proximal promoter elements including the TATA-box. Repression occurs by sterically hindering the assembly of the transcription initiation complex.</text>
</comment>
<comment type="subunit">
    <text evidence="1">Binds DNA as homodimer. Interacts with protein E1; this interaction greatly increases E1 DNA-binding activity. Interacts with protein L1; this interaction enhances E2-dependent replication and transcription activation. Interacts with protein L2; this interaction inhibits E2 transcriptional activity but not DNA replication function E2. Interacts with protein E7; this interaction inhibits E7 oncogenic activity. Interacts with host TAF1; this interaction modulates E2-dependent transcriptional regulation. Interacts with host BRD4; this interaction mediates E2 transcriptional activation function. Additionally, the interaction with host BRD4 on mitotic chromosomes mediates tethering of the viral genome. Interacts with host TOPBP1; this interaction is required for optimal viral DNA replication.</text>
</comment>
<comment type="interaction">
    <interactant intactId="EBI-7010529">
        <id>P17383</id>
    </interactant>
    <interactant intactId="EBI-723869">
        <id>O60885</id>
        <label>BRD4</label>
    </interactant>
    <organismsDiffer>true</organismsDiffer>
    <experiments>2</experiments>
</comment>
<comment type="subcellular location">
    <subcellularLocation>
        <location evidence="1">Host nucleus</location>
    </subcellularLocation>
</comment>
<comment type="PTM">
    <text evidence="1">Phosphorylated.</text>
</comment>
<comment type="PTM">
    <text evidence="1">Sumoylation plays a regulatory role in E2 transcriptional activity.</text>
</comment>
<comment type="similarity">
    <text evidence="1">Belongs to the papillomaviridae E2 protein family.</text>
</comment>
<reference key="1">
    <citation type="journal article" date="1989" name="Virology">
        <title>Nucleotide sequence of human papillomavirus type 31: a cervical neoplasia-associated virus.</title>
        <authorList>
            <person name="Goldsborough M.D."/>
            <person name="Disilvestre D."/>
            <person name="Temple G.F."/>
            <person name="Lorincz A.T."/>
        </authorList>
    </citation>
    <scope>NUCLEOTIDE SEQUENCE [GENOMIC DNA]</scope>
</reference>
<reference key="2">
    <citation type="journal article" date="1996" name="Biochemistry">
        <title>Solution structure of the DNA-binding domain of a human papillomavirus E2 protein: evidence for flexible DNA-binding regions.</title>
        <authorList>
            <person name="Liang H."/>
            <person name="Petros A.M."/>
            <person name="Meadows R.P."/>
            <person name="Yoon H.S."/>
            <person name="Egan D.A."/>
            <person name="Walter K."/>
            <person name="Holzman T.F."/>
            <person name="Robins T."/>
            <person name="Fesik S.W."/>
        </authorList>
    </citation>
    <scope>STRUCTURE BY NMR OF 291-372</scope>
</reference>
<name>VE2_HPV31</name>
<keyword id="KW-0002">3D-structure</keyword>
<keyword id="KW-0010">Activator</keyword>
<keyword id="KW-0235">DNA replication</keyword>
<keyword id="KW-0238">DNA-binding</keyword>
<keyword id="KW-0244">Early protein</keyword>
<keyword id="KW-1048">Host nucleus</keyword>
<keyword id="KW-1017">Isopeptide bond</keyword>
<keyword id="KW-0597">Phosphoprotein</keyword>
<keyword id="KW-1185">Reference proteome</keyword>
<keyword id="KW-0678">Repressor</keyword>
<keyword id="KW-0804">Transcription</keyword>
<keyword id="KW-0805">Transcription regulation</keyword>
<keyword id="KW-0832">Ubl conjugation</keyword>
<dbReference type="EMBL" id="J04353">
    <property type="protein sequence ID" value="AAA46953.1"/>
    <property type="molecule type" value="Genomic_DNA"/>
</dbReference>
<dbReference type="PIR" id="D32444">
    <property type="entry name" value="W2WL31"/>
</dbReference>
<dbReference type="PDB" id="1A7G">
    <property type="method" value="X-ray"/>
    <property type="resolution" value="2.40 A"/>
    <property type="chains" value="E=291-372"/>
</dbReference>
<dbReference type="PDB" id="1DHM">
    <property type="method" value="NMR"/>
    <property type="chains" value="A/B=291-372"/>
</dbReference>
<dbReference type="PDBsum" id="1A7G"/>
<dbReference type="PDBsum" id="1DHM"/>
<dbReference type="BMRB" id="P17383"/>
<dbReference type="SMR" id="P17383"/>
<dbReference type="IntAct" id="P17383">
    <property type="interactions" value="1"/>
</dbReference>
<dbReference type="MINT" id="P17383"/>
<dbReference type="EvolutionaryTrace" id="P17383"/>
<dbReference type="Proteomes" id="UP000009116">
    <property type="component" value="Genome"/>
</dbReference>
<dbReference type="GO" id="GO:0042025">
    <property type="term" value="C:host cell nucleus"/>
    <property type="evidence" value="ECO:0007669"/>
    <property type="project" value="UniProtKB-SubCell"/>
</dbReference>
<dbReference type="GO" id="GO:0003677">
    <property type="term" value="F:DNA binding"/>
    <property type="evidence" value="ECO:0007669"/>
    <property type="project" value="UniProtKB-UniRule"/>
</dbReference>
<dbReference type="GO" id="GO:0003700">
    <property type="term" value="F:DNA-binding transcription factor activity"/>
    <property type="evidence" value="ECO:0007669"/>
    <property type="project" value="UniProtKB-UniRule"/>
</dbReference>
<dbReference type="GO" id="GO:0000166">
    <property type="term" value="F:nucleotide binding"/>
    <property type="evidence" value="ECO:0007669"/>
    <property type="project" value="UniProtKB-UniRule"/>
</dbReference>
<dbReference type="GO" id="GO:0006260">
    <property type="term" value="P:DNA replication"/>
    <property type="evidence" value="ECO:0007669"/>
    <property type="project" value="UniProtKB-KW"/>
</dbReference>
<dbReference type="GO" id="GO:0006351">
    <property type="term" value="P:DNA-templated transcription"/>
    <property type="evidence" value="ECO:0007669"/>
    <property type="project" value="UniProtKB-UniRule"/>
</dbReference>
<dbReference type="GO" id="GO:0006275">
    <property type="term" value="P:regulation of DNA replication"/>
    <property type="evidence" value="ECO:0007669"/>
    <property type="project" value="UniProtKB-UniRule"/>
</dbReference>
<dbReference type="GO" id="GO:0039693">
    <property type="term" value="P:viral DNA genome replication"/>
    <property type="evidence" value="ECO:0007669"/>
    <property type="project" value="UniProtKB-UniRule"/>
</dbReference>
<dbReference type="Gene3D" id="3.30.70.330">
    <property type="match status" value="1"/>
</dbReference>
<dbReference type="Gene3D" id="1.10.287.30">
    <property type="entry name" value="E2 (early) protein, N terminal domain, subdomain 1"/>
    <property type="match status" value="1"/>
</dbReference>
<dbReference type="Gene3D" id="2.170.200.10">
    <property type="entry name" value="Papillomavirus E2 early protein domain"/>
    <property type="match status" value="1"/>
</dbReference>
<dbReference type="HAMAP" id="MF_04001">
    <property type="entry name" value="PPV_E2"/>
    <property type="match status" value="1"/>
</dbReference>
<dbReference type="InterPro" id="IPR035975">
    <property type="entry name" value="E2/EBNA1_C_sf"/>
</dbReference>
<dbReference type="InterPro" id="IPR012677">
    <property type="entry name" value="Nucleotide-bd_a/b_plait_sf"/>
</dbReference>
<dbReference type="InterPro" id="IPR000427">
    <property type="entry name" value="Papillomavirus_E2_C"/>
</dbReference>
<dbReference type="InterPro" id="IPR001866">
    <property type="entry name" value="PPV_E2_N"/>
</dbReference>
<dbReference type="InterPro" id="IPR033668">
    <property type="entry name" value="Reg_prot_E2"/>
</dbReference>
<dbReference type="InterPro" id="IPR036050">
    <property type="entry name" value="Regulatory_protein_E2_N"/>
</dbReference>
<dbReference type="InterPro" id="IPR042503">
    <property type="entry name" value="Regulatory_protein_E2_N_1"/>
</dbReference>
<dbReference type="InterPro" id="IPR042504">
    <property type="entry name" value="Regulatory_protein_E2_N_2"/>
</dbReference>
<dbReference type="Pfam" id="PF00511">
    <property type="entry name" value="PPV_E2_C"/>
    <property type="match status" value="1"/>
</dbReference>
<dbReference type="Pfam" id="PF00508">
    <property type="entry name" value="PPV_E2_N"/>
    <property type="match status" value="1"/>
</dbReference>
<dbReference type="SUPFAM" id="SSF51332">
    <property type="entry name" value="E2 regulatory, transactivation domain"/>
    <property type="match status" value="1"/>
</dbReference>
<dbReference type="SUPFAM" id="SSF54957">
    <property type="entry name" value="Viral DNA-binding domain"/>
    <property type="match status" value="1"/>
</dbReference>
<protein>
    <recommendedName>
        <fullName evidence="1">Regulatory protein E2</fullName>
    </recommendedName>
</protein>
<gene>
    <name evidence="1" type="primary">E2</name>
</gene>
<proteinExistence type="evidence at protein level"/>